<protein>
    <recommendedName>
        <fullName>Probable cinnamyl alcohol dehydrogenase</fullName>
        <shortName>CAD</shortName>
        <ecNumber evidence="1">1.1.1.195</ecNumber>
    </recommendedName>
</protein>
<reference key="1">
    <citation type="submission" date="1997-09" db="EMBL/GenBank/DDBJ databases">
        <title>Perennial ryegrass (Lolium perenne) CAD cDNA sequence.</title>
        <authorList>
            <person name="McAlister F.M."/>
            <person name="Watson J.M."/>
        </authorList>
    </citation>
    <scope>NUCLEOTIDE SEQUENCE [MRNA]</scope>
    <source>
        <strain>cv. Yatsyn</strain>
        <tissue>Leaf</tissue>
        <tissue>Stem</tissue>
    </source>
</reference>
<keyword id="KW-0438">Lignin biosynthesis</keyword>
<keyword id="KW-0479">Metal-binding</keyword>
<keyword id="KW-0521">NADP</keyword>
<keyword id="KW-0560">Oxidoreductase</keyword>
<keyword id="KW-0862">Zinc</keyword>
<accession>O22380</accession>
<dbReference type="EC" id="1.1.1.195" evidence="1"/>
<dbReference type="EMBL" id="AF010290">
    <property type="protein sequence ID" value="AAB70908.1"/>
    <property type="molecule type" value="mRNA"/>
</dbReference>
<dbReference type="SMR" id="O22380"/>
<dbReference type="UniPathway" id="UPA00711"/>
<dbReference type="GO" id="GO:0045551">
    <property type="term" value="F:cinnamyl-alcohol dehydrogenase activity"/>
    <property type="evidence" value="ECO:0007669"/>
    <property type="project" value="UniProtKB-EC"/>
</dbReference>
<dbReference type="GO" id="GO:0050268">
    <property type="term" value="F:coniferyl-alcohol dehydrogenase activity"/>
    <property type="evidence" value="ECO:0007669"/>
    <property type="project" value="RHEA"/>
</dbReference>
<dbReference type="GO" id="GO:0008270">
    <property type="term" value="F:zinc ion binding"/>
    <property type="evidence" value="ECO:0007669"/>
    <property type="project" value="InterPro"/>
</dbReference>
<dbReference type="GO" id="GO:0009809">
    <property type="term" value="P:lignin biosynthetic process"/>
    <property type="evidence" value="ECO:0007669"/>
    <property type="project" value="UniProtKB-KW"/>
</dbReference>
<dbReference type="CDD" id="cd05283">
    <property type="entry name" value="CAD1"/>
    <property type="match status" value="1"/>
</dbReference>
<dbReference type="FunFam" id="3.40.50.720:FF:000022">
    <property type="entry name" value="Cinnamyl alcohol dehydrogenase"/>
    <property type="match status" value="1"/>
</dbReference>
<dbReference type="FunFam" id="3.90.180.10:FF:000004">
    <property type="entry name" value="probable cinnamyl alcohol dehydrogenase"/>
    <property type="match status" value="1"/>
</dbReference>
<dbReference type="FunFam" id="3.90.180.10:FF:000100">
    <property type="entry name" value="Putative cinnamyl alcohol dehydrogenase 6"/>
    <property type="match status" value="1"/>
</dbReference>
<dbReference type="Gene3D" id="3.90.180.10">
    <property type="entry name" value="Medium-chain alcohol dehydrogenases, catalytic domain"/>
    <property type="match status" value="1"/>
</dbReference>
<dbReference type="Gene3D" id="3.40.50.720">
    <property type="entry name" value="NAD(P)-binding Rossmann-like Domain"/>
    <property type="match status" value="1"/>
</dbReference>
<dbReference type="InterPro" id="IPR013149">
    <property type="entry name" value="ADH-like_C"/>
</dbReference>
<dbReference type="InterPro" id="IPR013154">
    <property type="entry name" value="ADH-like_N"/>
</dbReference>
<dbReference type="InterPro" id="IPR002328">
    <property type="entry name" value="ADH_Zn_CS"/>
</dbReference>
<dbReference type="InterPro" id="IPR047109">
    <property type="entry name" value="CAD-like"/>
</dbReference>
<dbReference type="InterPro" id="IPR011032">
    <property type="entry name" value="GroES-like_sf"/>
</dbReference>
<dbReference type="InterPro" id="IPR036291">
    <property type="entry name" value="NAD(P)-bd_dom_sf"/>
</dbReference>
<dbReference type="InterPro" id="IPR020843">
    <property type="entry name" value="PKS_ER"/>
</dbReference>
<dbReference type="PANTHER" id="PTHR42683">
    <property type="entry name" value="ALDEHYDE REDUCTASE"/>
    <property type="match status" value="1"/>
</dbReference>
<dbReference type="Pfam" id="PF08240">
    <property type="entry name" value="ADH_N"/>
    <property type="match status" value="1"/>
</dbReference>
<dbReference type="Pfam" id="PF00107">
    <property type="entry name" value="ADH_zinc_N"/>
    <property type="match status" value="1"/>
</dbReference>
<dbReference type="SMART" id="SM00829">
    <property type="entry name" value="PKS_ER"/>
    <property type="match status" value="1"/>
</dbReference>
<dbReference type="SUPFAM" id="SSF50129">
    <property type="entry name" value="GroES-like"/>
    <property type="match status" value="1"/>
</dbReference>
<dbReference type="SUPFAM" id="SSF51735">
    <property type="entry name" value="NAD(P)-binding Rossmann-fold domains"/>
    <property type="match status" value="1"/>
</dbReference>
<dbReference type="PROSITE" id="PS00059">
    <property type="entry name" value="ADH_ZINC"/>
    <property type="match status" value="1"/>
</dbReference>
<name>CADH_LOLPR</name>
<organism>
    <name type="scientific">Lolium perenne</name>
    <name type="common">Perennial ryegrass</name>
    <dbReference type="NCBI Taxonomy" id="4522"/>
    <lineage>
        <taxon>Eukaryota</taxon>
        <taxon>Viridiplantae</taxon>
        <taxon>Streptophyta</taxon>
        <taxon>Embryophyta</taxon>
        <taxon>Tracheophyta</taxon>
        <taxon>Spermatophyta</taxon>
        <taxon>Magnoliopsida</taxon>
        <taxon>Liliopsida</taxon>
        <taxon>Poales</taxon>
        <taxon>Poaceae</taxon>
        <taxon>BOP clade</taxon>
        <taxon>Pooideae</taxon>
        <taxon>Poodae</taxon>
        <taxon>Poeae</taxon>
        <taxon>Poeae Chloroplast Group 2 (Poeae type)</taxon>
        <taxon>Loliodinae</taxon>
        <taxon>Loliinae</taxon>
        <taxon>Lolium</taxon>
    </lineage>
</organism>
<sequence>MGSVDASEKTITGWAARDATGHLSPYTYNLRRTGAEDVVLKVLYCGICHTDLHQTKNHLGASKYPMVPGHEVVGEVVEVGPEVSKYSVGDVVGVGVIVGCCRDCRPCKANVEQYCNKKIWSYNDVYTDGKPTQGGFAGSMVVDQKFVVKIPAGLAPEQAAPLLCAGVTVYSPLKHFGLMTPGLRGGILGLGGVGHMGVKVAKSMGHHVTVISSSDKKRAEAMDDLGADDYLVSSDEAQMAAAMDSLDYIIDTVPVKHPLEPYLALLKMDGKLVLMGVIGEPLSFVSPMVMLGRKTITGSFIGSIEETEEVLRFCVDKGLTSQIEVVKMDYLNQALERLERNDVRYRFVVDVAGSNIDDTAA</sequence>
<proteinExistence type="evidence at transcript level"/>
<comment type="function">
    <text evidence="1">Involved in lignin biosynthesis. Catalyzes the final step specific for the production of lignin monomers. Catalyzes the NADPH-dependent reduction of coniferaldehyde, 5-hydroxyconiferaldehyde, sinapaldehyde, 4-coumaraldehyde and caffeyl aldehyde to their respective alcohols.</text>
</comment>
<comment type="catalytic activity">
    <reaction evidence="1">
        <text>(E)-cinnamyl alcohol + NADP(+) = (E)-cinnamaldehyde + NADPH + H(+)</text>
        <dbReference type="Rhea" id="RHEA:10392"/>
        <dbReference type="ChEBI" id="CHEBI:15378"/>
        <dbReference type="ChEBI" id="CHEBI:16731"/>
        <dbReference type="ChEBI" id="CHEBI:33227"/>
        <dbReference type="ChEBI" id="CHEBI:57783"/>
        <dbReference type="ChEBI" id="CHEBI:58349"/>
        <dbReference type="EC" id="1.1.1.195"/>
    </reaction>
    <physiologicalReaction direction="right-to-left" evidence="1">
        <dbReference type="Rhea" id="RHEA:10394"/>
    </physiologicalReaction>
</comment>
<comment type="catalytic activity">
    <reaction evidence="1">
        <text>(E)-coniferol + NADP(+) = (E)-coniferaldehyde + NADPH + H(+)</text>
        <dbReference type="Rhea" id="RHEA:22444"/>
        <dbReference type="ChEBI" id="CHEBI:15378"/>
        <dbReference type="ChEBI" id="CHEBI:16547"/>
        <dbReference type="ChEBI" id="CHEBI:17745"/>
        <dbReference type="ChEBI" id="CHEBI:57783"/>
        <dbReference type="ChEBI" id="CHEBI:58349"/>
        <dbReference type="EC" id="1.1.1.195"/>
    </reaction>
    <physiologicalReaction direction="right-to-left" evidence="1">
        <dbReference type="Rhea" id="RHEA:22446"/>
    </physiologicalReaction>
</comment>
<comment type="catalytic activity">
    <reaction evidence="1">
        <text>(E)-sinapyl alcohol + NADP(+) = (E)-sinapaldehyde + NADPH + H(+)</text>
        <dbReference type="Rhea" id="RHEA:45704"/>
        <dbReference type="ChEBI" id="CHEBI:15378"/>
        <dbReference type="ChEBI" id="CHEBI:27949"/>
        <dbReference type="ChEBI" id="CHEBI:57783"/>
        <dbReference type="ChEBI" id="CHEBI:58349"/>
        <dbReference type="ChEBI" id="CHEBI:64557"/>
        <dbReference type="EC" id="1.1.1.195"/>
    </reaction>
    <physiologicalReaction direction="right-to-left" evidence="1">
        <dbReference type="Rhea" id="RHEA:45706"/>
    </physiologicalReaction>
</comment>
<comment type="catalytic activity">
    <reaction evidence="1">
        <text>(E)-4-coumaroyl alcohol + NADP(+) = (E)-4-coumaraldehyde + NADPH + H(+)</text>
        <dbReference type="Rhea" id="RHEA:45724"/>
        <dbReference type="ChEBI" id="CHEBI:15378"/>
        <dbReference type="ChEBI" id="CHEBI:28353"/>
        <dbReference type="ChEBI" id="CHEBI:57783"/>
        <dbReference type="ChEBI" id="CHEBI:58349"/>
        <dbReference type="ChEBI" id="CHEBI:64555"/>
        <dbReference type="EC" id="1.1.1.195"/>
    </reaction>
    <physiologicalReaction direction="right-to-left" evidence="1">
        <dbReference type="Rhea" id="RHEA:45726"/>
    </physiologicalReaction>
</comment>
<comment type="catalytic activity">
    <reaction evidence="1">
        <text>(E)-caffeyl alcohol + NADP(+) = (E)-caffeyl aldehyde + NADPH + H(+)</text>
        <dbReference type="Rhea" id="RHEA:45728"/>
        <dbReference type="ChEBI" id="CHEBI:15378"/>
        <dbReference type="ChEBI" id="CHEBI:28323"/>
        <dbReference type="ChEBI" id="CHEBI:31334"/>
        <dbReference type="ChEBI" id="CHEBI:57783"/>
        <dbReference type="ChEBI" id="CHEBI:58349"/>
    </reaction>
    <physiologicalReaction direction="right-to-left" evidence="1">
        <dbReference type="Rhea" id="RHEA:45730"/>
    </physiologicalReaction>
</comment>
<comment type="cofactor">
    <cofactor evidence="1">
        <name>Zn(2+)</name>
        <dbReference type="ChEBI" id="CHEBI:29105"/>
    </cofactor>
    <text evidence="1">Binds 2 Zn(2+) ions per subunit.</text>
</comment>
<comment type="pathway">
    <text evidence="1">Aromatic compound metabolism; phenylpropanoid biosynthesis.</text>
</comment>
<comment type="subunit">
    <text evidence="1">Homodimer.</text>
</comment>
<comment type="similarity">
    <text evidence="2">Belongs to the zinc-containing alcohol dehydrogenase family.</text>
</comment>
<feature type="chain" id="PRO_0000160796" description="Probable cinnamyl alcohol dehydrogenase">
    <location>
        <begin position="1"/>
        <end position="361"/>
    </location>
</feature>
<feature type="binding site" evidence="1">
    <location>
        <position position="48"/>
    </location>
    <ligand>
        <name>Zn(2+)</name>
        <dbReference type="ChEBI" id="CHEBI:29105"/>
        <label>1</label>
        <note>catalytic</note>
    </ligand>
</feature>
<feature type="binding site" evidence="1">
    <location>
        <position position="50"/>
    </location>
    <ligand>
        <name>NADP(+)</name>
        <dbReference type="ChEBI" id="CHEBI:58349"/>
    </ligand>
</feature>
<feature type="binding site" evidence="1">
    <location>
        <position position="70"/>
    </location>
    <ligand>
        <name>Zn(2+)</name>
        <dbReference type="ChEBI" id="CHEBI:29105"/>
        <label>1</label>
        <note>catalytic</note>
    </ligand>
</feature>
<feature type="binding site" evidence="1">
    <location>
        <position position="71"/>
    </location>
    <ligand>
        <name>Zn(2+)</name>
        <dbReference type="ChEBI" id="CHEBI:29105"/>
        <label>1</label>
        <note>catalytic</note>
    </ligand>
</feature>
<feature type="binding site" evidence="1">
    <location>
        <position position="101"/>
    </location>
    <ligand>
        <name>Zn(2+)</name>
        <dbReference type="ChEBI" id="CHEBI:29105"/>
        <label>2</label>
    </ligand>
</feature>
<feature type="binding site" evidence="1">
    <location>
        <position position="104"/>
    </location>
    <ligand>
        <name>Zn(2+)</name>
        <dbReference type="ChEBI" id="CHEBI:29105"/>
        <label>2</label>
    </ligand>
</feature>
<feature type="binding site" evidence="1">
    <location>
        <position position="107"/>
    </location>
    <ligand>
        <name>Zn(2+)</name>
        <dbReference type="ChEBI" id="CHEBI:29105"/>
        <label>2</label>
    </ligand>
</feature>
<feature type="binding site" evidence="1">
    <location>
        <position position="115"/>
    </location>
    <ligand>
        <name>Zn(2+)</name>
        <dbReference type="ChEBI" id="CHEBI:29105"/>
        <label>2</label>
    </ligand>
</feature>
<feature type="binding site" evidence="1">
    <location>
        <position position="164"/>
    </location>
    <ligand>
        <name>Zn(2+)</name>
        <dbReference type="ChEBI" id="CHEBI:29105"/>
        <label>1</label>
        <note>catalytic</note>
    </ligand>
</feature>
<feature type="binding site" evidence="1">
    <location>
        <position position="168"/>
    </location>
    <ligand>
        <name>NADP(+)</name>
        <dbReference type="ChEBI" id="CHEBI:58349"/>
    </ligand>
</feature>
<feature type="binding site" evidence="1">
    <location>
        <begin position="189"/>
        <end position="194"/>
    </location>
    <ligand>
        <name>NADP(+)</name>
        <dbReference type="ChEBI" id="CHEBI:58349"/>
    </ligand>
</feature>
<feature type="binding site" evidence="1">
    <location>
        <begin position="212"/>
        <end position="217"/>
    </location>
    <ligand>
        <name>NADP(+)</name>
        <dbReference type="ChEBI" id="CHEBI:58349"/>
    </ligand>
</feature>
<feature type="binding site" evidence="1">
    <location>
        <position position="252"/>
    </location>
    <ligand>
        <name>NADP(+)</name>
        <dbReference type="ChEBI" id="CHEBI:58349"/>
    </ligand>
</feature>
<feature type="binding site" evidence="1">
    <location>
        <position position="276"/>
    </location>
    <ligand>
        <name>NADP(+)</name>
        <dbReference type="ChEBI" id="CHEBI:58349"/>
    </ligand>
</feature>
<feature type="binding site" evidence="1">
    <location>
        <begin position="299"/>
        <end position="301"/>
    </location>
    <ligand>
        <name>NADP(+)</name>
        <dbReference type="ChEBI" id="CHEBI:58349"/>
    </ligand>
</feature>
<evidence type="ECO:0000250" key="1">
    <source>
        <dbReference type="UniProtKB" id="O49482"/>
    </source>
</evidence>
<evidence type="ECO:0000305" key="2"/>